<protein>
    <recommendedName>
        <fullName evidence="1">Glutathione-regulated potassium-efflux system protein KefC</fullName>
    </recommendedName>
    <alternativeName>
        <fullName evidence="1">K(+)/H(+) antiporter</fullName>
    </alternativeName>
</protein>
<keyword id="KW-0050">Antiport</keyword>
<keyword id="KW-0997">Cell inner membrane</keyword>
<keyword id="KW-1003">Cell membrane</keyword>
<keyword id="KW-0406">Ion transport</keyword>
<keyword id="KW-0472">Membrane</keyword>
<keyword id="KW-0630">Potassium</keyword>
<keyword id="KW-0633">Potassium transport</keyword>
<keyword id="KW-0812">Transmembrane</keyword>
<keyword id="KW-1133">Transmembrane helix</keyword>
<keyword id="KW-0813">Transport</keyword>
<gene>
    <name evidence="1" type="primary">kefC</name>
    <name type="ordered locus">EFER_0055</name>
</gene>
<sequence>MDSHTLIQALIYLGSAALIVPIAVRLGLGSVLGYLIAGCIIGPWGLRLVTDAESILHFAEIGVVLMLFIIGLELDPQRLWKLRAAVFGGGALQMVICGGLLGLFCMFLGLRWQVAELIGMTLALSSTAIAMQAMNERNLMVTQMGRSAFAVLLFQDIAAIPLVAMIPLLAASSASTTMGAFALSALKVAGALVLVVLLGRYVTRPALRFVARSGLREVFSAVALFLVFGFGLLLEEVGLSMAMGAFLAGVLLASSEYRHALESDIEPFKGLLLGLFFIGVGMSIDFGTLLENPLRIVILLLGFLIIKIAMLWLIARPLQVPNKQRRWFAVLLGQGSEFAFVVFGAAQMANVLEPEWAKSLTLAVALSMAATPILLVILNRLEQSSTEQAREADEIDEEQPRVIIAGFGRYGQITGRLLLSSGVKMVVLDHDPDHIETLRKFGMKVFYGDATRMDLLESAGAAKAEVLINAIDDPQTNLQLTEMVKEHFPHLQIIARARDVDHYIRLRQAGVEKPERETFEGALKTGRLALESLGLGPYEARERADVFRRFNIQMVEEMAVVENDTKARAAVYKRTSAMLSEIITEDREHLSLIQRHGWQGTEEGKHTGNMADEPETKPSS</sequence>
<name>KEFC_ESCF3</name>
<dbReference type="EMBL" id="CU928158">
    <property type="protein sequence ID" value="CAQ87641.1"/>
    <property type="molecule type" value="Genomic_DNA"/>
</dbReference>
<dbReference type="RefSeq" id="WP_000377102.1">
    <property type="nucleotide sequence ID" value="NC_011740.1"/>
</dbReference>
<dbReference type="SMR" id="B7LVT8"/>
<dbReference type="GeneID" id="75058857"/>
<dbReference type="KEGG" id="efe:EFER_0055"/>
<dbReference type="HOGENOM" id="CLU_005126_9_3_6"/>
<dbReference type="OrthoDB" id="9781411at2"/>
<dbReference type="Proteomes" id="UP000000745">
    <property type="component" value="Chromosome"/>
</dbReference>
<dbReference type="GO" id="GO:0005886">
    <property type="term" value="C:plasma membrane"/>
    <property type="evidence" value="ECO:0007669"/>
    <property type="project" value="UniProtKB-SubCell"/>
</dbReference>
<dbReference type="GO" id="GO:0019899">
    <property type="term" value="F:enzyme binding"/>
    <property type="evidence" value="ECO:0007669"/>
    <property type="project" value="InterPro"/>
</dbReference>
<dbReference type="GO" id="GO:0015503">
    <property type="term" value="F:glutathione-regulated potassium exporter activity"/>
    <property type="evidence" value="ECO:0007669"/>
    <property type="project" value="UniProtKB-UniRule"/>
</dbReference>
<dbReference type="GO" id="GO:0015643">
    <property type="term" value="F:toxic substance binding"/>
    <property type="evidence" value="ECO:0007669"/>
    <property type="project" value="InterPro"/>
</dbReference>
<dbReference type="GO" id="GO:1902600">
    <property type="term" value="P:proton transmembrane transport"/>
    <property type="evidence" value="ECO:0007669"/>
    <property type="project" value="InterPro"/>
</dbReference>
<dbReference type="GO" id="GO:0051595">
    <property type="term" value="P:response to methylglyoxal"/>
    <property type="evidence" value="ECO:0007669"/>
    <property type="project" value="InterPro"/>
</dbReference>
<dbReference type="FunFam" id="1.20.1530.20:FF:000001">
    <property type="entry name" value="Glutathione-regulated potassium-efflux system protein KefB"/>
    <property type="match status" value="1"/>
</dbReference>
<dbReference type="FunFam" id="3.40.50.720:FF:000036">
    <property type="entry name" value="Glutathione-regulated potassium-efflux system protein KefB"/>
    <property type="match status" value="1"/>
</dbReference>
<dbReference type="Gene3D" id="1.20.1530.20">
    <property type="match status" value="1"/>
</dbReference>
<dbReference type="Gene3D" id="3.40.50.720">
    <property type="entry name" value="NAD(P)-binding Rossmann-like Domain"/>
    <property type="match status" value="1"/>
</dbReference>
<dbReference type="HAMAP" id="MF_01413">
    <property type="entry name" value="K_H_efflux_KefC"/>
    <property type="match status" value="1"/>
</dbReference>
<dbReference type="InterPro" id="IPR006153">
    <property type="entry name" value="Cation/H_exchanger_TM"/>
</dbReference>
<dbReference type="InterPro" id="IPR004771">
    <property type="entry name" value="K/H_exchanger"/>
</dbReference>
<dbReference type="InterPro" id="IPR023941">
    <property type="entry name" value="K_H_efflux_KefC"/>
</dbReference>
<dbReference type="InterPro" id="IPR006036">
    <property type="entry name" value="K_uptake_TrkA"/>
</dbReference>
<dbReference type="InterPro" id="IPR038770">
    <property type="entry name" value="Na+/solute_symporter_sf"/>
</dbReference>
<dbReference type="InterPro" id="IPR036291">
    <property type="entry name" value="NAD(P)-bd_dom_sf"/>
</dbReference>
<dbReference type="InterPro" id="IPR003148">
    <property type="entry name" value="RCK_N"/>
</dbReference>
<dbReference type="NCBIfam" id="TIGR00932">
    <property type="entry name" value="2a37"/>
    <property type="match status" value="1"/>
</dbReference>
<dbReference type="NCBIfam" id="NF002924">
    <property type="entry name" value="PRK03562.1"/>
    <property type="match status" value="1"/>
</dbReference>
<dbReference type="PANTHER" id="PTHR46157:SF3">
    <property type="entry name" value="GLUTATHIONE-REGULATED POTASSIUM-EFFLUX SYSTEM PROTEIN KEFC"/>
    <property type="match status" value="1"/>
</dbReference>
<dbReference type="PANTHER" id="PTHR46157">
    <property type="entry name" value="K(+) EFFLUX ANTIPORTER 3, CHLOROPLASTIC"/>
    <property type="match status" value="1"/>
</dbReference>
<dbReference type="Pfam" id="PF00999">
    <property type="entry name" value="Na_H_Exchanger"/>
    <property type="match status" value="1"/>
</dbReference>
<dbReference type="Pfam" id="PF02254">
    <property type="entry name" value="TrkA_N"/>
    <property type="match status" value="1"/>
</dbReference>
<dbReference type="PRINTS" id="PR00335">
    <property type="entry name" value="KUPTAKETRKA"/>
</dbReference>
<dbReference type="SUPFAM" id="SSF51735">
    <property type="entry name" value="NAD(P)-binding Rossmann-fold domains"/>
    <property type="match status" value="1"/>
</dbReference>
<dbReference type="PROSITE" id="PS51201">
    <property type="entry name" value="RCK_N"/>
    <property type="match status" value="1"/>
</dbReference>
<feature type="chain" id="PRO_1000145543" description="Glutathione-regulated potassium-efflux system protein KefC">
    <location>
        <begin position="1"/>
        <end position="620"/>
    </location>
</feature>
<feature type="transmembrane region" description="Helical" evidence="1">
    <location>
        <begin position="4"/>
        <end position="24"/>
    </location>
</feature>
<feature type="transmembrane region" description="Helical" evidence="1">
    <location>
        <begin position="26"/>
        <end position="46"/>
    </location>
</feature>
<feature type="transmembrane region" description="Helical" evidence="1">
    <location>
        <begin position="54"/>
        <end position="74"/>
    </location>
</feature>
<feature type="transmembrane region" description="Helical" evidence="1">
    <location>
        <begin position="90"/>
        <end position="110"/>
    </location>
</feature>
<feature type="transmembrane region" description="Helical" evidence="1">
    <location>
        <begin position="114"/>
        <end position="134"/>
    </location>
</feature>
<feature type="transmembrane region" description="Helical" evidence="1">
    <location>
        <begin position="149"/>
        <end position="169"/>
    </location>
</feature>
<feature type="transmembrane region" description="Helical" evidence="1">
    <location>
        <begin position="178"/>
        <end position="198"/>
    </location>
</feature>
<feature type="transmembrane region" description="Helical" evidence="1">
    <location>
        <begin position="218"/>
        <end position="238"/>
    </location>
</feature>
<feature type="transmembrane region" description="Helical" evidence="1">
    <location>
        <begin position="270"/>
        <end position="290"/>
    </location>
</feature>
<feature type="transmembrane region" description="Helical" evidence="1">
    <location>
        <begin position="294"/>
        <end position="314"/>
    </location>
</feature>
<feature type="transmembrane region" description="Helical" evidence="1">
    <location>
        <begin position="327"/>
        <end position="347"/>
    </location>
</feature>
<feature type="transmembrane region" description="Helical" evidence="1">
    <location>
        <begin position="359"/>
        <end position="379"/>
    </location>
</feature>
<feature type="domain" description="RCK N-terminal" evidence="2">
    <location>
        <begin position="399"/>
        <end position="518"/>
    </location>
</feature>
<feature type="region of interest" description="Disordered" evidence="3">
    <location>
        <begin position="597"/>
        <end position="620"/>
    </location>
</feature>
<evidence type="ECO:0000255" key="1">
    <source>
        <dbReference type="HAMAP-Rule" id="MF_01413"/>
    </source>
</evidence>
<evidence type="ECO:0000255" key="2">
    <source>
        <dbReference type="PROSITE-ProRule" id="PRU00543"/>
    </source>
</evidence>
<evidence type="ECO:0000256" key="3">
    <source>
        <dbReference type="SAM" id="MobiDB-lite"/>
    </source>
</evidence>
<organism>
    <name type="scientific">Escherichia fergusonii (strain ATCC 35469 / DSM 13698 / CCUG 18766 / IAM 14443 / JCM 21226 / LMG 7866 / NBRC 102419 / NCTC 12128 / CDC 0568-73)</name>
    <dbReference type="NCBI Taxonomy" id="585054"/>
    <lineage>
        <taxon>Bacteria</taxon>
        <taxon>Pseudomonadati</taxon>
        <taxon>Pseudomonadota</taxon>
        <taxon>Gammaproteobacteria</taxon>
        <taxon>Enterobacterales</taxon>
        <taxon>Enterobacteriaceae</taxon>
        <taxon>Escherichia</taxon>
    </lineage>
</organism>
<accession>B7LVT8</accession>
<comment type="function">
    <text evidence="1">Pore-forming subunit of a potassium efflux system that confers protection against electrophiles. Catalyzes K(+)/H(+) antiport.</text>
</comment>
<comment type="subunit">
    <text evidence="1">Homodimer. Interacts with the regulatory subunit KefF.</text>
</comment>
<comment type="subcellular location">
    <subcellularLocation>
        <location evidence="1">Cell inner membrane</location>
        <topology evidence="1">Multi-pass membrane protein</topology>
    </subcellularLocation>
</comment>
<comment type="similarity">
    <text evidence="1">Belongs to the monovalent cation:proton antiporter 2 (CPA2) transporter (TC 2.A.37) family. KefC subfamily.</text>
</comment>
<proteinExistence type="inferred from homology"/>
<reference key="1">
    <citation type="journal article" date="2009" name="PLoS Genet.">
        <title>Organised genome dynamics in the Escherichia coli species results in highly diverse adaptive paths.</title>
        <authorList>
            <person name="Touchon M."/>
            <person name="Hoede C."/>
            <person name="Tenaillon O."/>
            <person name="Barbe V."/>
            <person name="Baeriswyl S."/>
            <person name="Bidet P."/>
            <person name="Bingen E."/>
            <person name="Bonacorsi S."/>
            <person name="Bouchier C."/>
            <person name="Bouvet O."/>
            <person name="Calteau A."/>
            <person name="Chiapello H."/>
            <person name="Clermont O."/>
            <person name="Cruveiller S."/>
            <person name="Danchin A."/>
            <person name="Diard M."/>
            <person name="Dossat C."/>
            <person name="Karoui M.E."/>
            <person name="Frapy E."/>
            <person name="Garry L."/>
            <person name="Ghigo J.M."/>
            <person name="Gilles A.M."/>
            <person name="Johnson J."/>
            <person name="Le Bouguenec C."/>
            <person name="Lescat M."/>
            <person name="Mangenot S."/>
            <person name="Martinez-Jehanne V."/>
            <person name="Matic I."/>
            <person name="Nassif X."/>
            <person name="Oztas S."/>
            <person name="Petit M.A."/>
            <person name="Pichon C."/>
            <person name="Rouy Z."/>
            <person name="Ruf C.S."/>
            <person name="Schneider D."/>
            <person name="Tourret J."/>
            <person name="Vacherie B."/>
            <person name="Vallenet D."/>
            <person name="Medigue C."/>
            <person name="Rocha E.P.C."/>
            <person name="Denamur E."/>
        </authorList>
    </citation>
    <scope>NUCLEOTIDE SEQUENCE [LARGE SCALE GENOMIC DNA]</scope>
    <source>
        <strain>ATCC 35469 / DSM 13698 / BCRC 15582 / CCUG 18766 / IAM 14443 / JCM 21226 / LMG 7866 / NBRC 102419 / NCTC 12128 / CDC 0568-73</strain>
    </source>
</reference>